<proteinExistence type="inferred from homology"/>
<keyword id="KW-0520">NAD</keyword>
<keyword id="KW-1185">Reference proteome</keyword>
<keyword id="KW-0808">Transferase</keyword>
<reference key="1">
    <citation type="journal article" date="1995" name="Nucleic Acids Res.">
        <title>Analysis of the Escherichia coli genome VI: DNA sequence of the region from 92.8 through 100 minutes.</title>
        <authorList>
            <person name="Burland V.D."/>
            <person name="Plunkett G. III"/>
            <person name="Sofia H.J."/>
            <person name="Daniels D.L."/>
            <person name="Blattner F.R."/>
        </authorList>
    </citation>
    <scope>NUCLEOTIDE SEQUENCE [LARGE SCALE GENOMIC DNA]</scope>
    <source>
        <strain>K12 / MG1655 / ATCC 47076</strain>
    </source>
</reference>
<reference key="2">
    <citation type="journal article" date="1997" name="Science">
        <title>The complete genome sequence of Escherichia coli K-12.</title>
        <authorList>
            <person name="Blattner F.R."/>
            <person name="Plunkett G. III"/>
            <person name="Bloch C.A."/>
            <person name="Perna N.T."/>
            <person name="Burland V."/>
            <person name="Riley M."/>
            <person name="Collado-Vides J."/>
            <person name="Glasner J.D."/>
            <person name="Rode C.K."/>
            <person name="Mayhew G.F."/>
            <person name="Gregor J."/>
            <person name="Davis N.W."/>
            <person name="Kirkpatrick H.A."/>
            <person name="Goeden M.A."/>
            <person name="Rose D.J."/>
            <person name="Mau B."/>
            <person name="Shao Y."/>
        </authorList>
    </citation>
    <scope>NUCLEOTIDE SEQUENCE [LARGE SCALE GENOMIC DNA]</scope>
    <source>
        <strain>K12 / MG1655 / ATCC 47076</strain>
    </source>
</reference>
<reference key="3">
    <citation type="journal article" date="2006" name="Mol. Syst. Biol.">
        <title>Highly accurate genome sequences of Escherichia coli K-12 strains MG1655 and W3110.</title>
        <authorList>
            <person name="Hayashi K."/>
            <person name="Morooka N."/>
            <person name="Yamamoto Y."/>
            <person name="Fujita K."/>
            <person name="Isono K."/>
            <person name="Choi S."/>
            <person name="Ohtsubo E."/>
            <person name="Baba T."/>
            <person name="Wanner B.L."/>
            <person name="Mori H."/>
            <person name="Horiuchi T."/>
        </authorList>
    </citation>
    <scope>NUCLEOTIDE SEQUENCE [LARGE SCALE GENOMIC DNA]</scope>
    <source>
        <strain>K12 / W3110 / ATCC 27325 / DSM 5911</strain>
    </source>
</reference>
<reference key="4">
    <citation type="journal article" date="1999" name="J. Biol. Chem.">
        <title>Transient ADP-ribosylation of a 2'-phosphate implicated in its removal from ligated tRNA during splicing in yeast.</title>
        <authorList>
            <person name="Spinelli S.L."/>
            <person name="Kierzek R."/>
            <person name="Turner D.H."/>
            <person name="Phizicky E.M."/>
        </authorList>
    </citation>
    <scope>FUNCTION</scope>
</reference>
<organism>
    <name type="scientific">Escherichia coli (strain K12)</name>
    <dbReference type="NCBI Taxonomy" id="83333"/>
    <lineage>
        <taxon>Bacteria</taxon>
        <taxon>Pseudomonadati</taxon>
        <taxon>Pseudomonadota</taxon>
        <taxon>Gammaproteobacteria</taxon>
        <taxon>Enterobacterales</taxon>
        <taxon>Enterobacteriaceae</taxon>
        <taxon>Escherichia</taxon>
    </lineage>
</organism>
<evidence type="ECO:0000269" key="1">
    <source>
    </source>
</evidence>
<evidence type="ECO:0000305" key="2"/>
<accession>P39380</accession>
<accession>Q2M5Y2</accession>
<sequence length="184" mass="20530">MAKYNEKELADTSKFLSFVLRHKPEAIGIVLDREGWADIDKLILCAQKAGKRLTRALLDTVVATSDKKRFSYSSDGRCIRAVQGHSTSQVAISFAEKTPPQFLYHGTASRFLDEIKKQGLIAGERHYVHLSADEATARKVGARHGSPVILTVKAQEMAKRGLPFWQAENGVWLTSTVAVEFLEW</sequence>
<gene>
    <name type="primary">kptA</name>
    <name type="synonym">yjiI</name>
    <name type="ordered locus">b4331</name>
    <name type="ordered locus">JW5784</name>
</gene>
<name>KPTA_ECOLI</name>
<dbReference type="EC" id="2.7.1.-"/>
<dbReference type="EMBL" id="U14003">
    <property type="protein sequence ID" value="AAA97227.1"/>
    <property type="status" value="ALT_INIT"/>
    <property type="molecule type" value="Genomic_DNA"/>
</dbReference>
<dbReference type="EMBL" id="U00096">
    <property type="protein sequence ID" value="AAC77287.2"/>
    <property type="molecule type" value="Genomic_DNA"/>
</dbReference>
<dbReference type="EMBL" id="AP009048">
    <property type="protein sequence ID" value="BAE78324.1"/>
    <property type="molecule type" value="Genomic_DNA"/>
</dbReference>
<dbReference type="PIR" id="S56556">
    <property type="entry name" value="S56556"/>
</dbReference>
<dbReference type="RefSeq" id="NP_418751.4">
    <property type="nucleotide sequence ID" value="NC_000913.3"/>
</dbReference>
<dbReference type="RefSeq" id="WP_001151855.1">
    <property type="nucleotide sequence ID" value="NZ_SSZK01000015.1"/>
</dbReference>
<dbReference type="SMR" id="P39380"/>
<dbReference type="BioGRID" id="4259662">
    <property type="interactions" value="127"/>
</dbReference>
<dbReference type="BioGRID" id="853138">
    <property type="interactions" value="3"/>
</dbReference>
<dbReference type="FunCoup" id="P39380">
    <property type="interactions" value="285"/>
</dbReference>
<dbReference type="IntAct" id="P39380">
    <property type="interactions" value="3"/>
</dbReference>
<dbReference type="STRING" id="511145.b4331"/>
<dbReference type="PaxDb" id="511145-b4331"/>
<dbReference type="EnsemblBacteria" id="AAC77287">
    <property type="protein sequence ID" value="AAC77287"/>
    <property type="gene ID" value="b4331"/>
</dbReference>
<dbReference type="GeneID" id="948858"/>
<dbReference type="KEGG" id="ecj:JW5784"/>
<dbReference type="KEGG" id="eco:b4331"/>
<dbReference type="KEGG" id="ecoc:C3026_23410"/>
<dbReference type="PATRIC" id="fig|1411691.4.peg.2357"/>
<dbReference type="EchoBASE" id="EB2458"/>
<dbReference type="eggNOG" id="COG1859">
    <property type="taxonomic scope" value="Bacteria"/>
</dbReference>
<dbReference type="HOGENOM" id="CLU_052998_4_0_6"/>
<dbReference type="InParanoid" id="P39380"/>
<dbReference type="OMA" id="RHGASQM"/>
<dbReference type="OrthoDB" id="4537997at2"/>
<dbReference type="PhylomeDB" id="P39380"/>
<dbReference type="BioCyc" id="EcoCyc:G7928-MONOMER"/>
<dbReference type="PRO" id="PR:P39380"/>
<dbReference type="Proteomes" id="UP000000625">
    <property type="component" value="Chromosome"/>
</dbReference>
<dbReference type="GO" id="GO:0003950">
    <property type="term" value="F:NAD+ poly-ADP-ribosyltransferase activity"/>
    <property type="evidence" value="ECO:0007669"/>
    <property type="project" value="InterPro"/>
</dbReference>
<dbReference type="GO" id="GO:0016772">
    <property type="term" value="F:transferase activity, transferring phosphorus-containing groups"/>
    <property type="evidence" value="ECO:0000314"/>
    <property type="project" value="EcoCyc"/>
</dbReference>
<dbReference type="GO" id="GO:0000215">
    <property type="term" value="F:tRNA 2'-phosphotransferase activity"/>
    <property type="evidence" value="ECO:0000318"/>
    <property type="project" value="GO_Central"/>
</dbReference>
<dbReference type="GO" id="GO:0008033">
    <property type="term" value="P:tRNA processing"/>
    <property type="evidence" value="ECO:0000318"/>
    <property type="project" value="GO_Central"/>
</dbReference>
<dbReference type="GO" id="GO:0006388">
    <property type="term" value="P:tRNA splicing, via endonucleolytic cleavage and ligation"/>
    <property type="evidence" value="ECO:0007669"/>
    <property type="project" value="UniProtKB-UniRule"/>
</dbReference>
<dbReference type="FunFam" id="1.10.10.970:FF:000001">
    <property type="entry name" value="RNA 2'-phosphotransferase"/>
    <property type="match status" value="1"/>
</dbReference>
<dbReference type="FunFam" id="3.20.170.30:FF:000001">
    <property type="entry name" value="RNA 2'-phosphotransferase"/>
    <property type="match status" value="1"/>
</dbReference>
<dbReference type="Gene3D" id="3.20.170.30">
    <property type="match status" value="1"/>
</dbReference>
<dbReference type="Gene3D" id="1.10.10.970">
    <property type="entry name" value="RNA 2'-phosphotransferase, Tpt1/KptA family, N-terminal domain"/>
    <property type="match status" value="1"/>
</dbReference>
<dbReference type="HAMAP" id="MF_00299">
    <property type="entry name" value="KptA"/>
    <property type="match status" value="1"/>
</dbReference>
<dbReference type="InterPro" id="IPR002745">
    <property type="entry name" value="Ptrans_KptA/Tpt1"/>
</dbReference>
<dbReference type="InterPro" id="IPR042081">
    <property type="entry name" value="RNA_2'-PTrans_C"/>
</dbReference>
<dbReference type="InterPro" id="IPR022928">
    <property type="entry name" value="RNA_2'-PTrans_KptA"/>
</dbReference>
<dbReference type="InterPro" id="IPR042080">
    <property type="entry name" value="RNA_2'-PTrans_N"/>
</dbReference>
<dbReference type="NCBIfam" id="NF002012">
    <property type="entry name" value="PRK00819.1-1"/>
    <property type="match status" value="1"/>
</dbReference>
<dbReference type="NCBIfam" id="NF002014">
    <property type="entry name" value="PRK00819.1-4"/>
    <property type="match status" value="1"/>
</dbReference>
<dbReference type="PANTHER" id="PTHR12684">
    <property type="entry name" value="PUTATIVE PHOSPHOTRANSFERASE"/>
    <property type="match status" value="1"/>
</dbReference>
<dbReference type="PANTHER" id="PTHR12684:SF2">
    <property type="entry name" value="TRNA 2'-PHOSPHOTRANSFERASE 1"/>
    <property type="match status" value="1"/>
</dbReference>
<dbReference type="Pfam" id="PF01885">
    <property type="entry name" value="PTS_2-RNA"/>
    <property type="match status" value="1"/>
</dbReference>
<dbReference type="SUPFAM" id="SSF56399">
    <property type="entry name" value="ADP-ribosylation"/>
    <property type="match status" value="1"/>
</dbReference>
<protein>
    <recommendedName>
        <fullName>RNA 2'-phosphotransferase</fullName>
        <ecNumber>2.7.1.-</ecNumber>
    </recommendedName>
</protein>
<feature type="chain" id="PRO_0000157476" description="RNA 2'-phosphotransferase">
    <location>
        <begin position="1"/>
        <end position="184"/>
    </location>
</feature>
<comment type="function">
    <text evidence="1">Removes the 2'-phosphate from RNA via an intermediate in which the phosphate is ADP-ribosylated by NAD followed by a presumed transesterification to release the RNA and generate ADP-ribose 1''-2''-cyclic phosphate (APPR&gt;P). May function as an ADP-ribosylase.</text>
</comment>
<comment type="similarity">
    <text evidence="2">Belongs to the KptA/TPT1 family.</text>
</comment>
<comment type="sequence caution" evidence="2">
    <conflict type="erroneous initiation">
        <sequence resource="EMBL-CDS" id="AAA97227"/>
    </conflict>
    <text>Extended N-terminus.</text>
</comment>